<reference key="1">
    <citation type="journal article" date="2009" name="J. Bacteriol.">
        <title>Genome sequence of Azotobacter vinelandii, an obligate aerobe specialized to support diverse anaerobic metabolic processes.</title>
        <authorList>
            <person name="Setubal J.C."/>
            <person name="Dos Santos P."/>
            <person name="Goldman B.S."/>
            <person name="Ertesvaag H."/>
            <person name="Espin G."/>
            <person name="Rubio L.M."/>
            <person name="Valla S."/>
            <person name="Almeida N.F."/>
            <person name="Balasubramanian D."/>
            <person name="Cromes L."/>
            <person name="Curatti L."/>
            <person name="Du Z."/>
            <person name="Godsy E."/>
            <person name="Goodner B."/>
            <person name="Hellner-Burris K."/>
            <person name="Hernandez J.A."/>
            <person name="Houmiel K."/>
            <person name="Imperial J."/>
            <person name="Kennedy C."/>
            <person name="Larson T.J."/>
            <person name="Latreille P."/>
            <person name="Ligon L.S."/>
            <person name="Lu J."/>
            <person name="Maerk M."/>
            <person name="Miller N.M."/>
            <person name="Norton S."/>
            <person name="O'Carroll I.P."/>
            <person name="Paulsen I."/>
            <person name="Raulfs E.C."/>
            <person name="Roemer R."/>
            <person name="Rosser J."/>
            <person name="Segura D."/>
            <person name="Slater S."/>
            <person name="Stricklin S.L."/>
            <person name="Studholme D.J."/>
            <person name="Sun J."/>
            <person name="Viana C.J."/>
            <person name="Wallin E."/>
            <person name="Wang B."/>
            <person name="Wheeler C."/>
            <person name="Zhu H."/>
            <person name="Dean D.R."/>
            <person name="Dixon R."/>
            <person name="Wood D."/>
        </authorList>
    </citation>
    <scope>NUCLEOTIDE SEQUENCE [LARGE SCALE GENOMIC DNA]</scope>
    <source>
        <strain>DJ / ATCC BAA-1303</strain>
    </source>
</reference>
<protein>
    <recommendedName>
        <fullName evidence="1">Phosphoglucosamine mutase</fullName>
        <ecNumber evidence="1">5.4.2.10</ecNumber>
    </recommendedName>
</protein>
<dbReference type="EC" id="5.4.2.10" evidence="1"/>
<dbReference type="EMBL" id="CP001157">
    <property type="protein sequence ID" value="ACO80409.1"/>
    <property type="molecule type" value="Genomic_DNA"/>
</dbReference>
<dbReference type="RefSeq" id="WP_012702777.1">
    <property type="nucleotide sequence ID" value="NC_012560.1"/>
</dbReference>
<dbReference type="SMR" id="C1DFL3"/>
<dbReference type="STRING" id="322710.Avin_42860"/>
<dbReference type="EnsemblBacteria" id="ACO80409">
    <property type="protein sequence ID" value="ACO80409"/>
    <property type="gene ID" value="Avin_42860"/>
</dbReference>
<dbReference type="GeneID" id="88187202"/>
<dbReference type="KEGG" id="avn:Avin_42860"/>
<dbReference type="eggNOG" id="COG1109">
    <property type="taxonomic scope" value="Bacteria"/>
</dbReference>
<dbReference type="HOGENOM" id="CLU_016950_7_0_6"/>
<dbReference type="OrthoDB" id="9803322at2"/>
<dbReference type="Proteomes" id="UP000002424">
    <property type="component" value="Chromosome"/>
</dbReference>
<dbReference type="GO" id="GO:0005829">
    <property type="term" value="C:cytosol"/>
    <property type="evidence" value="ECO:0007669"/>
    <property type="project" value="TreeGrafter"/>
</dbReference>
<dbReference type="GO" id="GO:0000287">
    <property type="term" value="F:magnesium ion binding"/>
    <property type="evidence" value="ECO:0007669"/>
    <property type="project" value="UniProtKB-UniRule"/>
</dbReference>
<dbReference type="GO" id="GO:0008966">
    <property type="term" value="F:phosphoglucosamine mutase activity"/>
    <property type="evidence" value="ECO:0007669"/>
    <property type="project" value="UniProtKB-UniRule"/>
</dbReference>
<dbReference type="GO" id="GO:0004615">
    <property type="term" value="F:phosphomannomutase activity"/>
    <property type="evidence" value="ECO:0007669"/>
    <property type="project" value="TreeGrafter"/>
</dbReference>
<dbReference type="GO" id="GO:0005975">
    <property type="term" value="P:carbohydrate metabolic process"/>
    <property type="evidence" value="ECO:0007669"/>
    <property type="project" value="InterPro"/>
</dbReference>
<dbReference type="GO" id="GO:0009252">
    <property type="term" value="P:peptidoglycan biosynthetic process"/>
    <property type="evidence" value="ECO:0007669"/>
    <property type="project" value="TreeGrafter"/>
</dbReference>
<dbReference type="GO" id="GO:0006048">
    <property type="term" value="P:UDP-N-acetylglucosamine biosynthetic process"/>
    <property type="evidence" value="ECO:0007669"/>
    <property type="project" value="TreeGrafter"/>
</dbReference>
<dbReference type="CDD" id="cd05802">
    <property type="entry name" value="GlmM"/>
    <property type="match status" value="1"/>
</dbReference>
<dbReference type="FunFam" id="3.30.310.50:FF:000001">
    <property type="entry name" value="Phosphoglucosamine mutase"/>
    <property type="match status" value="1"/>
</dbReference>
<dbReference type="FunFam" id="3.40.120.10:FF:000001">
    <property type="entry name" value="Phosphoglucosamine mutase"/>
    <property type="match status" value="1"/>
</dbReference>
<dbReference type="FunFam" id="3.40.120.10:FF:000002">
    <property type="entry name" value="Phosphoglucosamine mutase"/>
    <property type="match status" value="1"/>
</dbReference>
<dbReference type="Gene3D" id="3.40.120.10">
    <property type="entry name" value="Alpha-D-Glucose-1,6-Bisphosphate, subunit A, domain 3"/>
    <property type="match status" value="3"/>
</dbReference>
<dbReference type="Gene3D" id="3.30.310.50">
    <property type="entry name" value="Alpha-D-phosphohexomutase, C-terminal domain"/>
    <property type="match status" value="1"/>
</dbReference>
<dbReference type="HAMAP" id="MF_01554_B">
    <property type="entry name" value="GlmM_B"/>
    <property type="match status" value="1"/>
</dbReference>
<dbReference type="InterPro" id="IPR005844">
    <property type="entry name" value="A-D-PHexomutase_a/b/a-I"/>
</dbReference>
<dbReference type="InterPro" id="IPR016055">
    <property type="entry name" value="A-D-PHexomutase_a/b/a-I/II/III"/>
</dbReference>
<dbReference type="InterPro" id="IPR005845">
    <property type="entry name" value="A-D-PHexomutase_a/b/a-II"/>
</dbReference>
<dbReference type="InterPro" id="IPR005846">
    <property type="entry name" value="A-D-PHexomutase_a/b/a-III"/>
</dbReference>
<dbReference type="InterPro" id="IPR005843">
    <property type="entry name" value="A-D-PHexomutase_C"/>
</dbReference>
<dbReference type="InterPro" id="IPR036900">
    <property type="entry name" value="A-D-PHexomutase_C_sf"/>
</dbReference>
<dbReference type="InterPro" id="IPR016066">
    <property type="entry name" value="A-D-PHexomutase_CS"/>
</dbReference>
<dbReference type="InterPro" id="IPR005841">
    <property type="entry name" value="Alpha-D-phosphohexomutase_SF"/>
</dbReference>
<dbReference type="InterPro" id="IPR006352">
    <property type="entry name" value="GlmM_bact"/>
</dbReference>
<dbReference type="InterPro" id="IPR050060">
    <property type="entry name" value="Phosphoglucosamine_mutase"/>
</dbReference>
<dbReference type="NCBIfam" id="TIGR01455">
    <property type="entry name" value="glmM"/>
    <property type="match status" value="1"/>
</dbReference>
<dbReference type="NCBIfam" id="NF008139">
    <property type="entry name" value="PRK10887.1"/>
    <property type="match status" value="1"/>
</dbReference>
<dbReference type="PANTHER" id="PTHR42946:SF1">
    <property type="entry name" value="PHOSPHOGLUCOMUTASE (ALPHA-D-GLUCOSE-1,6-BISPHOSPHATE-DEPENDENT)"/>
    <property type="match status" value="1"/>
</dbReference>
<dbReference type="PANTHER" id="PTHR42946">
    <property type="entry name" value="PHOSPHOHEXOSE MUTASE"/>
    <property type="match status" value="1"/>
</dbReference>
<dbReference type="Pfam" id="PF02878">
    <property type="entry name" value="PGM_PMM_I"/>
    <property type="match status" value="1"/>
</dbReference>
<dbReference type="Pfam" id="PF02879">
    <property type="entry name" value="PGM_PMM_II"/>
    <property type="match status" value="1"/>
</dbReference>
<dbReference type="Pfam" id="PF02880">
    <property type="entry name" value="PGM_PMM_III"/>
    <property type="match status" value="1"/>
</dbReference>
<dbReference type="Pfam" id="PF00408">
    <property type="entry name" value="PGM_PMM_IV"/>
    <property type="match status" value="1"/>
</dbReference>
<dbReference type="PRINTS" id="PR00509">
    <property type="entry name" value="PGMPMM"/>
</dbReference>
<dbReference type="SUPFAM" id="SSF55957">
    <property type="entry name" value="Phosphoglucomutase, C-terminal domain"/>
    <property type="match status" value="1"/>
</dbReference>
<dbReference type="SUPFAM" id="SSF53738">
    <property type="entry name" value="Phosphoglucomutase, first 3 domains"/>
    <property type="match status" value="3"/>
</dbReference>
<dbReference type="PROSITE" id="PS00710">
    <property type="entry name" value="PGM_PMM"/>
    <property type="match status" value="1"/>
</dbReference>
<feature type="chain" id="PRO_1000215482" description="Phosphoglucosamine mutase">
    <location>
        <begin position="1"/>
        <end position="445"/>
    </location>
</feature>
<feature type="active site" description="Phosphoserine intermediate" evidence="1">
    <location>
        <position position="101"/>
    </location>
</feature>
<feature type="binding site" description="via phosphate group" evidence="1">
    <location>
        <position position="101"/>
    </location>
    <ligand>
        <name>Mg(2+)</name>
        <dbReference type="ChEBI" id="CHEBI:18420"/>
    </ligand>
</feature>
<feature type="binding site" evidence="1">
    <location>
        <position position="240"/>
    </location>
    <ligand>
        <name>Mg(2+)</name>
        <dbReference type="ChEBI" id="CHEBI:18420"/>
    </ligand>
</feature>
<feature type="binding site" evidence="1">
    <location>
        <position position="242"/>
    </location>
    <ligand>
        <name>Mg(2+)</name>
        <dbReference type="ChEBI" id="CHEBI:18420"/>
    </ligand>
</feature>
<feature type="binding site" evidence="1">
    <location>
        <position position="244"/>
    </location>
    <ligand>
        <name>Mg(2+)</name>
        <dbReference type="ChEBI" id="CHEBI:18420"/>
    </ligand>
</feature>
<feature type="modified residue" description="Phosphoserine" evidence="1">
    <location>
        <position position="101"/>
    </location>
</feature>
<comment type="function">
    <text evidence="1">Catalyzes the conversion of glucosamine-6-phosphate to glucosamine-1-phosphate.</text>
</comment>
<comment type="catalytic activity">
    <reaction evidence="1">
        <text>alpha-D-glucosamine 1-phosphate = D-glucosamine 6-phosphate</text>
        <dbReference type="Rhea" id="RHEA:23424"/>
        <dbReference type="ChEBI" id="CHEBI:58516"/>
        <dbReference type="ChEBI" id="CHEBI:58725"/>
        <dbReference type="EC" id="5.4.2.10"/>
    </reaction>
</comment>
<comment type="cofactor">
    <cofactor evidence="1">
        <name>Mg(2+)</name>
        <dbReference type="ChEBI" id="CHEBI:18420"/>
    </cofactor>
    <text evidence="1">Binds 1 Mg(2+) ion per subunit.</text>
</comment>
<comment type="PTM">
    <text evidence="1">Activated by phosphorylation.</text>
</comment>
<comment type="similarity">
    <text evidence="1">Belongs to the phosphohexose mutase family.</text>
</comment>
<evidence type="ECO:0000255" key="1">
    <source>
        <dbReference type="HAMAP-Rule" id="MF_01554"/>
    </source>
</evidence>
<proteinExistence type="inferred from homology"/>
<sequence>MSKKYFGTDGIRGRVGEYPITPDFMLKLGWAAGKAFRRQGICRVLVGKDTRISGYMFESVLEAGLSAAGADVLLLGPMPTPAIAYLTRTFHAEAGIVISASHNPHYDNGIKFFSGQGTKLPDELELVIEELLDNPMTVVDSAQLGKVSRINDAAGRYIEFCKSSVPTGTSFAGLKMVVDCAHGATYKVAPNVFRELGAEVAVLAAQPNGLNINDRCGSTDIVALQAEVLMQRADLGVAFDGDGDRVLMVDHTGAVVDGDELLFLIARDMHEHGKLQGGVVGTLMSNLGLELALQDMGIPFVRAKVGDRYVMAELLARNWQLGGEGSGHIVCCHHSTTGDGIIAALQVLRALKHRGQRLAEARQGMRKFPQVLVNVRYAGDKDPVGHPVVQEACERVTEQMAGRGRVLLRKSGTEPLVRVMVEGDDESQVRLHADNLAKIVSDVCA</sequence>
<organism>
    <name type="scientific">Azotobacter vinelandii (strain DJ / ATCC BAA-1303)</name>
    <dbReference type="NCBI Taxonomy" id="322710"/>
    <lineage>
        <taxon>Bacteria</taxon>
        <taxon>Pseudomonadati</taxon>
        <taxon>Pseudomonadota</taxon>
        <taxon>Gammaproteobacteria</taxon>
        <taxon>Pseudomonadales</taxon>
        <taxon>Pseudomonadaceae</taxon>
        <taxon>Azotobacter</taxon>
    </lineage>
</organism>
<keyword id="KW-0413">Isomerase</keyword>
<keyword id="KW-0460">Magnesium</keyword>
<keyword id="KW-0479">Metal-binding</keyword>
<keyword id="KW-0597">Phosphoprotein</keyword>
<gene>
    <name evidence="1" type="primary">glmM</name>
    <name type="ordered locus">Avin_42860</name>
</gene>
<name>GLMM_AZOVD</name>
<accession>C1DFL3</accession>